<accession>Q6C938</accession>
<comment type="function">
    <text evidence="1">Probably involved in transport through the plasma membrane.</text>
</comment>
<comment type="subcellular location">
    <subcellularLocation>
        <location evidence="1">Cell membrane</location>
        <topology evidence="1">Multi-pass membrane protein</topology>
    </subcellularLocation>
</comment>
<comment type="similarity">
    <text evidence="4">Belongs to the CTL (choline transporter-like) family.</text>
</comment>
<keyword id="KW-1003">Cell membrane</keyword>
<keyword id="KW-0472">Membrane</keyword>
<keyword id="KW-1185">Reference proteome</keyword>
<keyword id="KW-0812">Transmembrane</keyword>
<keyword id="KW-1133">Transmembrane helix</keyword>
<keyword id="KW-0813">Transport</keyword>
<dbReference type="EMBL" id="CR382130">
    <property type="protein sequence ID" value="CAG81012.1"/>
    <property type="molecule type" value="Genomic_DNA"/>
</dbReference>
<dbReference type="RefSeq" id="XP_502824.1">
    <property type="nucleotide sequence ID" value="XM_502824.1"/>
</dbReference>
<dbReference type="SMR" id="Q6C938"/>
<dbReference type="FunCoup" id="Q6C938">
    <property type="interactions" value="246"/>
</dbReference>
<dbReference type="STRING" id="284591.Q6C938"/>
<dbReference type="EnsemblFungi" id="CAG81012">
    <property type="protein sequence ID" value="CAG81012"/>
    <property type="gene ID" value="YALI0_D14498g"/>
</dbReference>
<dbReference type="KEGG" id="yli:2910244"/>
<dbReference type="VEuPathDB" id="FungiDB:YALI0_D14498g"/>
<dbReference type="HOGENOM" id="CLU_026724_0_0_1"/>
<dbReference type="InParanoid" id="Q6C938"/>
<dbReference type="OMA" id="DTIFVAM"/>
<dbReference type="OrthoDB" id="19523at4891"/>
<dbReference type="Proteomes" id="UP000001300">
    <property type="component" value="Chromosome D"/>
</dbReference>
<dbReference type="GO" id="GO:0016020">
    <property type="term" value="C:membrane"/>
    <property type="evidence" value="ECO:0000318"/>
    <property type="project" value="GO_Central"/>
</dbReference>
<dbReference type="GO" id="GO:0005886">
    <property type="term" value="C:plasma membrane"/>
    <property type="evidence" value="ECO:0007669"/>
    <property type="project" value="UniProtKB-SubCell"/>
</dbReference>
<dbReference type="GO" id="GO:0022857">
    <property type="term" value="F:transmembrane transporter activity"/>
    <property type="evidence" value="ECO:0000318"/>
    <property type="project" value="GO_Central"/>
</dbReference>
<dbReference type="GO" id="GO:0055085">
    <property type="term" value="P:transmembrane transport"/>
    <property type="evidence" value="ECO:0000318"/>
    <property type="project" value="GO_Central"/>
</dbReference>
<dbReference type="InterPro" id="IPR007603">
    <property type="entry name" value="Choline_transptr-like"/>
</dbReference>
<dbReference type="PANTHER" id="PTHR12385">
    <property type="entry name" value="CHOLINE TRANSPORTER-LIKE (SLC FAMILY 44)"/>
    <property type="match status" value="1"/>
</dbReference>
<dbReference type="PANTHER" id="PTHR12385:SF4">
    <property type="entry name" value="PROTEIN PNS1"/>
    <property type="match status" value="1"/>
</dbReference>
<dbReference type="Pfam" id="PF04515">
    <property type="entry name" value="Choline_transpo"/>
    <property type="match status" value="1"/>
</dbReference>
<feature type="chain" id="PRO_0000191739" description="Protein PNS1">
    <location>
        <begin position="1"/>
        <end position="571"/>
    </location>
</feature>
<feature type="topological domain" description="Cytoplasmic" evidence="2">
    <location>
        <begin position="1"/>
        <end position="118"/>
    </location>
</feature>
<feature type="transmembrane region" description="Helical" evidence="2">
    <location>
        <begin position="119"/>
        <end position="139"/>
    </location>
</feature>
<feature type="topological domain" description="Extracellular" evidence="2">
    <location>
        <begin position="140"/>
        <end position="166"/>
    </location>
</feature>
<feature type="transmembrane region" description="Helical" evidence="2">
    <location>
        <begin position="167"/>
        <end position="187"/>
    </location>
</feature>
<feature type="topological domain" description="Cytoplasmic" evidence="2">
    <location>
        <begin position="188"/>
        <end position="189"/>
    </location>
</feature>
<feature type="transmembrane region" description="Helical" evidence="2">
    <location>
        <begin position="190"/>
        <end position="210"/>
    </location>
</feature>
<feature type="topological domain" description="Extracellular" evidence="2">
    <location>
        <position position="211"/>
    </location>
</feature>
<feature type="transmembrane region" description="Helical" evidence="2">
    <location>
        <begin position="212"/>
        <end position="232"/>
    </location>
</feature>
<feature type="topological domain" description="Cytoplasmic" evidence="2">
    <location>
        <begin position="233"/>
        <end position="263"/>
    </location>
</feature>
<feature type="transmembrane region" description="Helical" evidence="2">
    <location>
        <begin position="264"/>
        <end position="284"/>
    </location>
</feature>
<feature type="topological domain" description="Extracellular" evidence="2">
    <location>
        <begin position="285"/>
        <end position="311"/>
    </location>
</feature>
<feature type="transmembrane region" description="Helical" evidence="2">
    <location>
        <begin position="312"/>
        <end position="332"/>
    </location>
</feature>
<feature type="topological domain" description="Cytoplasmic" evidence="2">
    <location>
        <begin position="333"/>
        <end position="369"/>
    </location>
</feature>
<feature type="transmembrane region" description="Helical" evidence="2">
    <location>
        <begin position="370"/>
        <end position="390"/>
    </location>
</feature>
<feature type="topological domain" description="Extracellular" evidence="2">
    <location>
        <begin position="391"/>
        <end position="406"/>
    </location>
</feature>
<feature type="transmembrane region" description="Helical" evidence="2">
    <location>
        <begin position="407"/>
        <end position="427"/>
    </location>
</feature>
<feature type="topological domain" description="Cytoplasmic" evidence="2">
    <location>
        <begin position="428"/>
        <end position="472"/>
    </location>
</feature>
<feature type="transmembrane region" description="Helical" evidence="2">
    <location>
        <begin position="473"/>
        <end position="493"/>
    </location>
</feature>
<feature type="topological domain" description="Extracellular" evidence="2">
    <location>
        <begin position="494"/>
        <end position="503"/>
    </location>
</feature>
<feature type="transmembrane region" description="Helical" evidence="2">
    <location>
        <begin position="504"/>
        <end position="524"/>
    </location>
</feature>
<feature type="topological domain" description="Cytoplasmic" evidence="2">
    <location>
        <begin position="525"/>
        <end position="571"/>
    </location>
</feature>
<feature type="region of interest" description="Disordered" evidence="3">
    <location>
        <begin position="1"/>
        <end position="96"/>
    </location>
</feature>
<feature type="compositionally biased region" description="Polar residues" evidence="3">
    <location>
        <begin position="15"/>
        <end position="31"/>
    </location>
</feature>
<feature type="compositionally biased region" description="Low complexity" evidence="3">
    <location>
        <begin position="39"/>
        <end position="52"/>
    </location>
</feature>
<feature type="compositionally biased region" description="Low complexity" evidence="3">
    <location>
        <begin position="71"/>
        <end position="80"/>
    </location>
</feature>
<feature type="compositionally biased region" description="Pro residues" evidence="3">
    <location>
        <begin position="81"/>
        <end position="90"/>
    </location>
</feature>
<gene>
    <name type="primary">PNS1</name>
    <name type="ordered locus">YALI0D14498g</name>
</gene>
<reference key="1">
    <citation type="journal article" date="2004" name="Nature">
        <title>Genome evolution in yeasts.</title>
        <authorList>
            <person name="Dujon B."/>
            <person name="Sherman D."/>
            <person name="Fischer G."/>
            <person name="Durrens P."/>
            <person name="Casaregola S."/>
            <person name="Lafontaine I."/>
            <person name="de Montigny J."/>
            <person name="Marck C."/>
            <person name="Neuveglise C."/>
            <person name="Talla E."/>
            <person name="Goffard N."/>
            <person name="Frangeul L."/>
            <person name="Aigle M."/>
            <person name="Anthouard V."/>
            <person name="Babour A."/>
            <person name="Barbe V."/>
            <person name="Barnay S."/>
            <person name="Blanchin S."/>
            <person name="Beckerich J.-M."/>
            <person name="Beyne E."/>
            <person name="Bleykasten C."/>
            <person name="Boisrame A."/>
            <person name="Boyer J."/>
            <person name="Cattolico L."/>
            <person name="Confanioleri F."/>
            <person name="de Daruvar A."/>
            <person name="Despons L."/>
            <person name="Fabre E."/>
            <person name="Fairhead C."/>
            <person name="Ferry-Dumazet H."/>
            <person name="Groppi A."/>
            <person name="Hantraye F."/>
            <person name="Hennequin C."/>
            <person name="Jauniaux N."/>
            <person name="Joyet P."/>
            <person name="Kachouri R."/>
            <person name="Kerrest A."/>
            <person name="Koszul R."/>
            <person name="Lemaire M."/>
            <person name="Lesur I."/>
            <person name="Ma L."/>
            <person name="Muller H."/>
            <person name="Nicaud J.-M."/>
            <person name="Nikolski M."/>
            <person name="Oztas S."/>
            <person name="Ozier-Kalogeropoulos O."/>
            <person name="Pellenz S."/>
            <person name="Potier S."/>
            <person name="Richard G.-F."/>
            <person name="Straub M.-L."/>
            <person name="Suleau A."/>
            <person name="Swennen D."/>
            <person name="Tekaia F."/>
            <person name="Wesolowski-Louvel M."/>
            <person name="Westhof E."/>
            <person name="Wirth B."/>
            <person name="Zeniou-Meyer M."/>
            <person name="Zivanovic Y."/>
            <person name="Bolotin-Fukuhara M."/>
            <person name="Thierry A."/>
            <person name="Bouchier C."/>
            <person name="Caudron B."/>
            <person name="Scarpelli C."/>
            <person name="Gaillardin C."/>
            <person name="Weissenbach J."/>
            <person name="Wincker P."/>
            <person name="Souciet J.-L."/>
        </authorList>
    </citation>
    <scope>NUCLEOTIDE SEQUENCE [LARGE SCALE GENOMIC DNA]</scope>
    <source>
        <strain>CLIB 122 / E 150</strain>
    </source>
</reference>
<evidence type="ECO:0000250" key="1"/>
<evidence type="ECO:0000255" key="2"/>
<evidence type="ECO:0000256" key="3">
    <source>
        <dbReference type="SAM" id="MobiDB-lite"/>
    </source>
</evidence>
<evidence type="ECO:0000305" key="4"/>
<organism>
    <name type="scientific">Yarrowia lipolytica (strain CLIB 122 / E 150)</name>
    <name type="common">Yeast</name>
    <name type="synonym">Candida lipolytica</name>
    <dbReference type="NCBI Taxonomy" id="284591"/>
    <lineage>
        <taxon>Eukaryota</taxon>
        <taxon>Fungi</taxon>
        <taxon>Dikarya</taxon>
        <taxon>Ascomycota</taxon>
        <taxon>Saccharomycotina</taxon>
        <taxon>Dipodascomycetes</taxon>
        <taxon>Dipodascales</taxon>
        <taxon>Dipodascales incertae sedis</taxon>
        <taxon>Yarrowia</taxon>
    </lineage>
</organism>
<name>PNS1_YARLI</name>
<proteinExistence type="inferred from homology"/>
<protein>
    <recommendedName>
        <fullName>Protein PNS1</fullName>
    </recommendedName>
</protein>
<sequence length="571" mass="63808">MNDEEKHLAAPANAYQPNMHYQQQQEKQTGYNAEYDTHQGGYNQNQNQDYYNHSQGGYQMDNMGQHGGYQGNPNDNYNNQQPPPYTPDFPPDYNYKPNPNAATFDEAFAVPKPKWNDKIGLVILALIFSGYLALSIIVIRAYAQTHSFQGWGIYSGENDYSLNTHTLILYAFVLATAMVLSLLYFIAARVWTKQFIWITYILHLLFSWGTAIYYLVVGYYSAGIVFIVFAALTTWWFWCSRKRIPFATIVLQTLIDVTRANPSVLVISAVGTVVGACFGTWFSFTIVSIYVKYDPDNRNPGCMTTGGSCSNGKLIGLILFAIFCGYYLTEVIKNVIHVTISGVYGSWYYCSKSDQGMPKHAAMSSFRRAVTYSLGSISLGSLIVSIINFIRQILSVLQQDARQSGDTLATVLLCFVQCCFGVLDWLVTYFNHYAYSYIALYGKAYVPSAKATWKLMQTRGIDAMVNDSLIGSVLSFGASFVAYAAALVAYCFLKYTDPSYNSGGGFYAPVVGLAFVIALQVSNITNVSLKSGCSTFFLALARDPEVLRVSYPQIYEEICRTYPPARDKLDI</sequence>